<protein>
    <recommendedName>
        <fullName evidence="1">UPF0231 protein YacL</fullName>
    </recommendedName>
</protein>
<feature type="chain" id="PRO_1000136309" description="UPF0231 protein YacL">
    <location>
        <begin position="1"/>
        <end position="120"/>
    </location>
</feature>
<gene>
    <name evidence="1" type="primary">yacL</name>
    <name type="ordered locus">SbBS512_E0112</name>
</gene>
<comment type="similarity">
    <text evidence="1">Belongs to the UPF0231 family.</text>
</comment>
<organism>
    <name type="scientific">Shigella boydii serotype 18 (strain CDC 3083-94 / BS512)</name>
    <dbReference type="NCBI Taxonomy" id="344609"/>
    <lineage>
        <taxon>Bacteria</taxon>
        <taxon>Pseudomonadati</taxon>
        <taxon>Pseudomonadota</taxon>
        <taxon>Gammaproteobacteria</taxon>
        <taxon>Enterobacterales</taxon>
        <taxon>Enterobacteriaceae</taxon>
        <taxon>Shigella</taxon>
    </lineage>
</organism>
<sequence length="120" mass="13942">MDYEFLRDITGVVKVRMSMGHEVVGHWFNEEVKENLALLDEVEQAAHALKGSERSWQRAGHEYTLWMDGEEVMVRANQLEFAGDEMEEGMNYYDEESLSLCGVEDFLQVVAAYRNFVQQK</sequence>
<reference key="1">
    <citation type="submission" date="2008-05" db="EMBL/GenBank/DDBJ databases">
        <title>Complete sequence of Shigella boydii serotype 18 strain BS512.</title>
        <authorList>
            <person name="Rasko D.A."/>
            <person name="Rosovitz M."/>
            <person name="Maurelli A.T."/>
            <person name="Myers G."/>
            <person name="Seshadri R."/>
            <person name="Cer R."/>
            <person name="Jiang L."/>
            <person name="Ravel J."/>
            <person name="Sebastian Y."/>
        </authorList>
    </citation>
    <scope>NUCLEOTIDE SEQUENCE [LARGE SCALE GENOMIC DNA]</scope>
    <source>
        <strain>CDC 3083-94 / BS512</strain>
    </source>
</reference>
<name>YACL_SHIB3</name>
<evidence type="ECO:0000255" key="1">
    <source>
        <dbReference type="HAMAP-Rule" id="MF_01053"/>
    </source>
</evidence>
<keyword id="KW-1185">Reference proteome</keyword>
<accession>B2U2W8</accession>
<dbReference type="EMBL" id="CP001063">
    <property type="protein sequence ID" value="ACD09052.1"/>
    <property type="molecule type" value="Genomic_DNA"/>
</dbReference>
<dbReference type="RefSeq" id="WP_000384306.1">
    <property type="nucleotide sequence ID" value="NC_010658.1"/>
</dbReference>
<dbReference type="STRING" id="344609.SbBS512_E0112"/>
<dbReference type="GeneID" id="93777317"/>
<dbReference type="KEGG" id="sbc:SbBS512_E0112"/>
<dbReference type="HOGENOM" id="CLU_139226_0_0_6"/>
<dbReference type="Proteomes" id="UP000001030">
    <property type="component" value="Chromosome"/>
</dbReference>
<dbReference type="HAMAP" id="MF_01053">
    <property type="entry name" value="UPF0231"/>
    <property type="match status" value="1"/>
</dbReference>
<dbReference type="InterPro" id="IPR008249">
    <property type="entry name" value="UPF0231"/>
</dbReference>
<dbReference type="NCBIfam" id="NF003574">
    <property type="entry name" value="PRK05248.1-1"/>
    <property type="match status" value="1"/>
</dbReference>
<dbReference type="NCBIfam" id="NF003576">
    <property type="entry name" value="PRK05248.1-3"/>
    <property type="match status" value="1"/>
</dbReference>
<dbReference type="Pfam" id="PF06062">
    <property type="entry name" value="UPF0231"/>
    <property type="match status" value="1"/>
</dbReference>
<dbReference type="PIRSF" id="PIRSF006287">
    <property type="entry name" value="UCP006287"/>
    <property type="match status" value="1"/>
</dbReference>
<proteinExistence type="inferred from homology"/>